<keyword id="KW-0004">4Fe-4S</keyword>
<keyword id="KW-0408">Iron</keyword>
<keyword id="KW-0411">Iron-sulfur</keyword>
<keyword id="KW-0414">Isoprene biosynthesis</keyword>
<keyword id="KW-0479">Metal-binding</keyword>
<keyword id="KW-0560">Oxidoreductase</keyword>
<evidence type="ECO:0000255" key="1">
    <source>
        <dbReference type="HAMAP-Rule" id="MF_00191"/>
    </source>
</evidence>
<feature type="chain" id="PRO_0000128867" description="4-hydroxy-3-methylbut-2-enyl diphosphate reductase">
    <location>
        <begin position="1"/>
        <end position="316"/>
    </location>
</feature>
<feature type="active site" description="Proton donor" evidence="1">
    <location>
        <position position="126"/>
    </location>
</feature>
<feature type="binding site" evidence="1">
    <location>
        <position position="12"/>
    </location>
    <ligand>
        <name>[4Fe-4S] cluster</name>
        <dbReference type="ChEBI" id="CHEBI:49883"/>
    </ligand>
</feature>
<feature type="binding site" evidence="1">
    <location>
        <position position="41"/>
    </location>
    <ligand>
        <name>(2E)-4-hydroxy-3-methylbut-2-enyl diphosphate</name>
        <dbReference type="ChEBI" id="CHEBI:128753"/>
    </ligand>
</feature>
<feature type="binding site" evidence="1">
    <location>
        <position position="41"/>
    </location>
    <ligand>
        <name>dimethylallyl diphosphate</name>
        <dbReference type="ChEBI" id="CHEBI:57623"/>
    </ligand>
</feature>
<feature type="binding site" evidence="1">
    <location>
        <position position="41"/>
    </location>
    <ligand>
        <name>isopentenyl diphosphate</name>
        <dbReference type="ChEBI" id="CHEBI:128769"/>
    </ligand>
</feature>
<feature type="binding site" evidence="1">
    <location>
        <position position="74"/>
    </location>
    <ligand>
        <name>(2E)-4-hydroxy-3-methylbut-2-enyl diphosphate</name>
        <dbReference type="ChEBI" id="CHEBI:128753"/>
    </ligand>
</feature>
<feature type="binding site" evidence="1">
    <location>
        <position position="74"/>
    </location>
    <ligand>
        <name>dimethylallyl diphosphate</name>
        <dbReference type="ChEBI" id="CHEBI:57623"/>
    </ligand>
</feature>
<feature type="binding site" evidence="1">
    <location>
        <position position="74"/>
    </location>
    <ligand>
        <name>isopentenyl diphosphate</name>
        <dbReference type="ChEBI" id="CHEBI:128769"/>
    </ligand>
</feature>
<feature type="binding site" evidence="1">
    <location>
        <position position="96"/>
    </location>
    <ligand>
        <name>[4Fe-4S] cluster</name>
        <dbReference type="ChEBI" id="CHEBI:49883"/>
    </ligand>
</feature>
<feature type="binding site" evidence="1">
    <location>
        <position position="124"/>
    </location>
    <ligand>
        <name>(2E)-4-hydroxy-3-methylbut-2-enyl diphosphate</name>
        <dbReference type="ChEBI" id="CHEBI:128753"/>
    </ligand>
</feature>
<feature type="binding site" evidence="1">
    <location>
        <position position="124"/>
    </location>
    <ligand>
        <name>dimethylallyl diphosphate</name>
        <dbReference type="ChEBI" id="CHEBI:57623"/>
    </ligand>
</feature>
<feature type="binding site" evidence="1">
    <location>
        <position position="124"/>
    </location>
    <ligand>
        <name>isopentenyl diphosphate</name>
        <dbReference type="ChEBI" id="CHEBI:128769"/>
    </ligand>
</feature>
<feature type="binding site" evidence="1">
    <location>
        <position position="167"/>
    </location>
    <ligand>
        <name>(2E)-4-hydroxy-3-methylbut-2-enyl diphosphate</name>
        <dbReference type="ChEBI" id="CHEBI:128753"/>
    </ligand>
</feature>
<feature type="binding site" evidence="1">
    <location>
        <position position="197"/>
    </location>
    <ligand>
        <name>[4Fe-4S] cluster</name>
        <dbReference type="ChEBI" id="CHEBI:49883"/>
    </ligand>
</feature>
<feature type="binding site" evidence="1">
    <location>
        <position position="225"/>
    </location>
    <ligand>
        <name>(2E)-4-hydroxy-3-methylbut-2-enyl diphosphate</name>
        <dbReference type="ChEBI" id="CHEBI:128753"/>
    </ligand>
</feature>
<feature type="binding site" evidence="1">
    <location>
        <position position="225"/>
    </location>
    <ligand>
        <name>dimethylallyl diphosphate</name>
        <dbReference type="ChEBI" id="CHEBI:57623"/>
    </ligand>
</feature>
<feature type="binding site" evidence="1">
    <location>
        <position position="225"/>
    </location>
    <ligand>
        <name>isopentenyl diphosphate</name>
        <dbReference type="ChEBI" id="CHEBI:128769"/>
    </ligand>
</feature>
<feature type="binding site" evidence="1">
    <location>
        <position position="226"/>
    </location>
    <ligand>
        <name>(2E)-4-hydroxy-3-methylbut-2-enyl diphosphate</name>
        <dbReference type="ChEBI" id="CHEBI:128753"/>
    </ligand>
</feature>
<feature type="binding site" evidence="1">
    <location>
        <position position="226"/>
    </location>
    <ligand>
        <name>dimethylallyl diphosphate</name>
        <dbReference type="ChEBI" id="CHEBI:57623"/>
    </ligand>
</feature>
<feature type="binding site" evidence="1">
    <location>
        <position position="226"/>
    </location>
    <ligand>
        <name>isopentenyl diphosphate</name>
        <dbReference type="ChEBI" id="CHEBI:128769"/>
    </ligand>
</feature>
<feature type="binding site" evidence="1">
    <location>
        <position position="227"/>
    </location>
    <ligand>
        <name>(2E)-4-hydroxy-3-methylbut-2-enyl diphosphate</name>
        <dbReference type="ChEBI" id="CHEBI:128753"/>
    </ligand>
</feature>
<feature type="binding site" evidence="1">
    <location>
        <position position="227"/>
    </location>
    <ligand>
        <name>dimethylallyl diphosphate</name>
        <dbReference type="ChEBI" id="CHEBI:57623"/>
    </ligand>
</feature>
<feature type="binding site" evidence="1">
    <location>
        <position position="227"/>
    </location>
    <ligand>
        <name>isopentenyl diphosphate</name>
        <dbReference type="ChEBI" id="CHEBI:128769"/>
    </ligand>
</feature>
<feature type="binding site" evidence="1">
    <location>
        <position position="269"/>
    </location>
    <ligand>
        <name>(2E)-4-hydroxy-3-methylbut-2-enyl diphosphate</name>
        <dbReference type="ChEBI" id="CHEBI:128753"/>
    </ligand>
</feature>
<feature type="binding site" evidence="1">
    <location>
        <position position="269"/>
    </location>
    <ligand>
        <name>dimethylallyl diphosphate</name>
        <dbReference type="ChEBI" id="CHEBI:57623"/>
    </ligand>
</feature>
<feature type="binding site" evidence="1">
    <location>
        <position position="269"/>
    </location>
    <ligand>
        <name>isopentenyl diphosphate</name>
        <dbReference type="ChEBI" id="CHEBI:128769"/>
    </ligand>
</feature>
<proteinExistence type="inferred from homology"/>
<dbReference type="EC" id="1.17.7.4" evidence="1"/>
<dbReference type="EMBL" id="AE017220">
    <property type="protein sequence ID" value="AAX63949.1"/>
    <property type="molecule type" value="Genomic_DNA"/>
</dbReference>
<dbReference type="RefSeq" id="WP_001166428.1">
    <property type="nucleotide sequence ID" value="NC_006905.1"/>
</dbReference>
<dbReference type="SMR" id="Q57TL2"/>
<dbReference type="KEGG" id="sec:SCH_0043"/>
<dbReference type="HOGENOM" id="CLU_027486_1_0_6"/>
<dbReference type="UniPathway" id="UPA00056">
    <property type="reaction ID" value="UER00097"/>
</dbReference>
<dbReference type="UniPathway" id="UPA00059">
    <property type="reaction ID" value="UER00105"/>
</dbReference>
<dbReference type="Proteomes" id="UP000000538">
    <property type="component" value="Chromosome"/>
</dbReference>
<dbReference type="GO" id="GO:0051539">
    <property type="term" value="F:4 iron, 4 sulfur cluster binding"/>
    <property type="evidence" value="ECO:0007669"/>
    <property type="project" value="UniProtKB-UniRule"/>
</dbReference>
<dbReference type="GO" id="GO:0051745">
    <property type="term" value="F:4-hydroxy-3-methylbut-2-enyl diphosphate reductase activity"/>
    <property type="evidence" value="ECO:0007669"/>
    <property type="project" value="UniProtKB-UniRule"/>
</dbReference>
<dbReference type="GO" id="GO:0046872">
    <property type="term" value="F:metal ion binding"/>
    <property type="evidence" value="ECO:0007669"/>
    <property type="project" value="UniProtKB-KW"/>
</dbReference>
<dbReference type="GO" id="GO:0050992">
    <property type="term" value="P:dimethylallyl diphosphate biosynthetic process"/>
    <property type="evidence" value="ECO:0007669"/>
    <property type="project" value="UniProtKB-UniRule"/>
</dbReference>
<dbReference type="GO" id="GO:0019288">
    <property type="term" value="P:isopentenyl diphosphate biosynthetic process, methylerythritol 4-phosphate pathway"/>
    <property type="evidence" value="ECO:0007669"/>
    <property type="project" value="UniProtKB-UniRule"/>
</dbReference>
<dbReference type="GO" id="GO:0016114">
    <property type="term" value="P:terpenoid biosynthetic process"/>
    <property type="evidence" value="ECO:0007669"/>
    <property type="project" value="UniProtKB-UniRule"/>
</dbReference>
<dbReference type="CDD" id="cd13944">
    <property type="entry name" value="lytB_ispH"/>
    <property type="match status" value="1"/>
</dbReference>
<dbReference type="FunFam" id="3.40.1010.20:FF:000001">
    <property type="entry name" value="4-hydroxy-3-methylbut-2-enyl diphosphate reductase"/>
    <property type="match status" value="1"/>
</dbReference>
<dbReference type="FunFam" id="3.40.50.11270:FF:000001">
    <property type="entry name" value="4-hydroxy-3-methylbut-2-enyl diphosphate reductase"/>
    <property type="match status" value="1"/>
</dbReference>
<dbReference type="Gene3D" id="3.40.50.11270">
    <property type="match status" value="1"/>
</dbReference>
<dbReference type="Gene3D" id="3.40.1010.20">
    <property type="entry name" value="4-hydroxy-3-methylbut-2-enyl diphosphate reductase, catalytic domain"/>
    <property type="match status" value="2"/>
</dbReference>
<dbReference type="HAMAP" id="MF_00191">
    <property type="entry name" value="IspH"/>
    <property type="match status" value="1"/>
</dbReference>
<dbReference type="InterPro" id="IPR003451">
    <property type="entry name" value="LytB/IspH"/>
</dbReference>
<dbReference type="NCBIfam" id="TIGR00216">
    <property type="entry name" value="ispH_lytB"/>
    <property type="match status" value="1"/>
</dbReference>
<dbReference type="NCBIfam" id="NF002188">
    <property type="entry name" value="PRK01045.1-2"/>
    <property type="match status" value="1"/>
</dbReference>
<dbReference type="NCBIfam" id="NF002190">
    <property type="entry name" value="PRK01045.1-4"/>
    <property type="match status" value="1"/>
</dbReference>
<dbReference type="PANTHER" id="PTHR30426">
    <property type="entry name" value="4-HYDROXY-3-METHYLBUT-2-ENYL DIPHOSPHATE REDUCTASE"/>
    <property type="match status" value="1"/>
</dbReference>
<dbReference type="PANTHER" id="PTHR30426:SF0">
    <property type="entry name" value="4-HYDROXY-3-METHYLBUT-2-ENYL DIPHOSPHATE REDUCTASE"/>
    <property type="match status" value="1"/>
</dbReference>
<dbReference type="Pfam" id="PF02401">
    <property type="entry name" value="LYTB"/>
    <property type="match status" value="1"/>
</dbReference>
<reference key="1">
    <citation type="journal article" date="2005" name="Nucleic Acids Res.">
        <title>The genome sequence of Salmonella enterica serovar Choleraesuis, a highly invasive and resistant zoonotic pathogen.</title>
        <authorList>
            <person name="Chiu C.-H."/>
            <person name="Tang P."/>
            <person name="Chu C."/>
            <person name="Hu S."/>
            <person name="Bao Q."/>
            <person name="Yu J."/>
            <person name="Chou Y.-Y."/>
            <person name="Wang H.-S."/>
            <person name="Lee Y.-S."/>
        </authorList>
    </citation>
    <scope>NUCLEOTIDE SEQUENCE [LARGE SCALE GENOMIC DNA]</scope>
    <source>
        <strain>SC-B67</strain>
    </source>
</reference>
<name>ISPH_SALCH</name>
<comment type="function">
    <text evidence="1">Catalyzes the conversion of 1-hydroxy-2-methyl-2-(E)-butenyl 4-diphosphate (HMBPP) into a mixture of isopentenyl diphosphate (IPP) and dimethylallyl diphosphate (DMAPP). Acts in the terminal step of the DOXP/MEP pathway for isoprenoid precursor biosynthesis.</text>
</comment>
<comment type="catalytic activity">
    <reaction evidence="1">
        <text>isopentenyl diphosphate + 2 oxidized [2Fe-2S]-[ferredoxin] + H2O = (2E)-4-hydroxy-3-methylbut-2-enyl diphosphate + 2 reduced [2Fe-2S]-[ferredoxin] + 2 H(+)</text>
        <dbReference type="Rhea" id="RHEA:24488"/>
        <dbReference type="Rhea" id="RHEA-COMP:10000"/>
        <dbReference type="Rhea" id="RHEA-COMP:10001"/>
        <dbReference type="ChEBI" id="CHEBI:15377"/>
        <dbReference type="ChEBI" id="CHEBI:15378"/>
        <dbReference type="ChEBI" id="CHEBI:33737"/>
        <dbReference type="ChEBI" id="CHEBI:33738"/>
        <dbReference type="ChEBI" id="CHEBI:128753"/>
        <dbReference type="ChEBI" id="CHEBI:128769"/>
        <dbReference type="EC" id="1.17.7.4"/>
    </reaction>
</comment>
<comment type="catalytic activity">
    <reaction evidence="1">
        <text>dimethylallyl diphosphate + 2 oxidized [2Fe-2S]-[ferredoxin] + H2O = (2E)-4-hydroxy-3-methylbut-2-enyl diphosphate + 2 reduced [2Fe-2S]-[ferredoxin] + 2 H(+)</text>
        <dbReference type="Rhea" id="RHEA:24825"/>
        <dbReference type="Rhea" id="RHEA-COMP:10000"/>
        <dbReference type="Rhea" id="RHEA-COMP:10001"/>
        <dbReference type="ChEBI" id="CHEBI:15377"/>
        <dbReference type="ChEBI" id="CHEBI:15378"/>
        <dbReference type="ChEBI" id="CHEBI:33737"/>
        <dbReference type="ChEBI" id="CHEBI:33738"/>
        <dbReference type="ChEBI" id="CHEBI:57623"/>
        <dbReference type="ChEBI" id="CHEBI:128753"/>
        <dbReference type="EC" id="1.17.7.4"/>
    </reaction>
</comment>
<comment type="cofactor">
    <cofactor evidence="1">
        <name>[4Fe-4S] cluster</name>
        <dbReference type="ChEBI" id="CHEBI:49883"/>
    </cofactor>
    <text evidence="1">Binds 1 [4Fe-4S] cluster per subunit.</text>
</comment>
<comment type="pathway">
    <text evidence="1">Isoprenoid biosynthesis; dimethylallyl diphosphate biosynthesis; dimethylallyl diphosphate from (2E)-4-hydroxy-3-methylbutenyl diphosphate: step 1/1.</text>
</comment>
<comment type="pathway">
    <text evidence="1">Isoprenoid biosynthesis; isopentenyl diphosphate biosynthesis via DXP pathway; isopentenyl diphosphate from 1-deoxy-D-xylulose 5-phosphate: step 6/6.</text>
</comment>
<comment type="subunit">
    <text evidence="1">Homodimer.</text>
</comment>
<comment type="similarity">
    <text evidence="1">Belongs to the IspH family.</text>
</comment>
<accession>Q57TL2</accession>
<sequence>MQILLANPRGFCAGVDRAISIVENALAIYGAPIYVRHEVVHNRYVVDSLRQRGAIFIEQISEVPDGAILIFSAHGVSQAVRNEAKSRDLTVFDATCPLVTKVHMEVARASRRGEESILIGHAGHPEVEGTMGQYSNPEGGMYLVESPEDVWTLNVKNEGKLSFMTQTTLSVDDTSDVIDALRKRFPKIVGPRKDDICYATTNRQEAVRALAEQADVVLVVGSKNSSNSNRLAELAQRMGRTAFLIDDAADIQEAWVKEAACVGVTAGASAPDILVQNVIARLREFGGGEAVTLEGREENIVFEVPKELRVDVREVE</sequence>
<organism>
    <name type="scientific">Salmonella choleraesuis (strain SC-B67)</name>
    <dbReference type="NCBI Taxonomy" id="321314"/>
    <lineage>
        <taxon>Bacteria</taxon>
        <taxon>Pseudomonadati</taxon>
        <taxon>Pseudomonadota</taxon>
        <taxon>Gammaproteobacteria</taxon>
        <taxon>Enterobacterales</taxon>
        <taxon>Enterobacteriaceae</taxon>
        <taxon>Salmonella</taxon>
    </lineage>
</organism>
<protein>
    <recommendedName>
        <fullName evidence="1">4-hydroxy-3-methylbut-2-enyl diphosphate reductase</fullName>
        <shortName evidence="1">HMBPP reductase</shortName>
        <ecNumber evidence="1">1.17.7.4</ecNumber>
    </recommendedName>
</protein>
<gene>
    <name evidence="1" type="primary">ispH</name>
    <name type="synonym">lytB</name>
    <name type="ordered locus">SCH_0043</name>
</gene>